<proteinExistence type="evidence at transcript level"/>
<accession>Q9SY95</accession>
<feature type="signal peptide" evidence="3">
    <location>
        <begin position="1"/>
        <end position="19"/>
    </location>
</feature>
<feature type="chain" id="PRO_0000401318" description="G-type lectin S-receptor-like serine/threonine-protein kinase At1g61550">
    <location>
        <begin position="20"/>
        <end position="802"/>
    </location>
</feature>
<feature type="topological domain" description="Extracellular" evidence="3">
    <location>
        <begin position="20"/>
        <end position="421"/>
    </location>
</feature>
<feature type="transmembrane region" description="Helical" evidence="3">
    <location>
        <begin position="422"/>
        <end position="442"/>
    </location>
</feature>
<feature type="topological domain" description="Cytoplasmic" evidence="3">
    <location>
        <begin position="443"/>
        <end position="802"/>
    </location>
</feature>
<feature type="domain" description="Bulb-type lectin" evidence="4">
    <location>
        <begin position="20"/>
        <end position="139"/>
    </location>
</feature>
<feature type="domain" description="EGF-like" evidence="5">
    <location>
        <begin position="273"/>
        <end position="309"/>
    </location>
</feature>
<feature type="domain" description="PAN" evidence="7">
    <location>
        <begin position="328"/>
        <end position="410"/>
    </location>
</feature>
<feature type="domain" description="Protein kinase" evidence="6">
    <location>
        <begin position="489"/>
        <end position="774"/>
    </location>
</feature>
<feature type="region of interest" description="CaM-binding" evidence="1">
    <location>
        <begin position="578"/>
        <end position="595"/>
    </location>
</feature>
<feature type="active site" description="Proton acceptor" evidence="6 8">
    <location>
        <position position="614"/>
    </location>
</feature>
<feature type="binding site" evidence="6">
    <location>
        <begin position="495"/>
        <end position="503"/>
    </location>
    <ligand>
        <name>ATP</name>
        <dbReference type="ChEBI" id="CHEBI:30616"/>
    </ligand>
</feature>
<feature type="binding site" evidence="6">
    <location>
        <position position="517"/>
    </location>
    <ligand>
        <name>ATP</name>
        <dbReference type="ChEBI" id="CHEBI:30616"/>
    </ligand>
</feature>
<feature type="modified residue" description="Phosphoserine" evidence="2">
    <location>
        <position position="523"/>
    </location>
</feature>
<feature type="modified residue" description="Phosphoserine" evidence="2">
    <location>
        <position position="538"/>
    </location>
</feature>
<feature type="modified residue" description="Phosphoserine" evidence="2">
    <location>
        <position position="618"/>
    </location>
</feature>
<feature type="modified residue" description="Phosphoserine" evidence="2">
    <location>
        <position position="631"/>
    </location>
</feature>
<feature type="modified residue" description="Phosphothreonine" evidence="2">
    <location>
        <position position="648"/>
    </location>
</feature>
<feature type="modified residue" description="Phosphoserine" evidence="2">
    <location>
        <position position="691"/>
    </location>
</feature>
<feature type="glycosylation site" description="N-linked (GlcNAc...) asparagine" evidence="3">
    <location>
        <position position="48"/>
    </location>
</feature>
<feature type="glycosylation site" description="N-linked (GlcNAc...) asparagine" evidence="3">
    <location>
        <position position="89"/>
    </location>
</feature>
<feature type="glycosylation site" description="N-linked (GlcNAc...) asparagine" evidence="3">
    <location>
        <position position="112"/>
    </location>
</feature>
<feature type="glycosylation site" description="N-linked (GlcNAc...) asparagine" evidence="3">
    <location>
        <position position="231"/>
    </location>
</feature>
<feature type="glycosylation site" description="N-linked (GlcNAc...) asparagine" evidence="3">
    <location>
        <position position="262"/>
    </location>
</feature>
<feature type="glycosylation site" description="N-linked (GlcNAc...) asparagine" evidence="3">
    <location>
        <position position="315"/>
    </location>
</feature>
<feature type="glycosylation site" description="N-linked (GlcNAc...) asparagine" evidence="3">
    <location>
        <position position="331"/>
    </location>
</feature>
<feature type="glycosylation site" description="N-linked (GlcNAc...) asparagine" evidence="3">
    <location>
        <position position="370"/>
    </location>
</feature>
<feature type="disulfide bond" evidence="1">
    <location>
        <begin position="277"/>
        <end position="289"/>
    </location>
</feature>
<feature type="disulfide bond" evidence="1">
    <location>
        <begin position="283"/>
        <end position="297"/>
    </location>
</feature>
<feature type="disulfide bond" evidence="1">
    <location>
        <begin position="363"/>
        <end position="384"/>
    </location>
</feature>
<feature type="disulfide bond" evidence="1">
    <location>
        <begin position="367"/>
        <end position="373"/>
    </location>
</feature>
<gene>
    <name type="ordered locus">At1g61550</name>
    <name type="ORF">T25B24.10</name>
</gene>
<evidence type="ECO:0000250" key="1"/>
<evidence type="ECO:0000250" key="2">
    <source>
        <dbReference type="UniProtKB" id="Q9LPZ9"/>
    </source>
</evidence>
<evidence type="ECO:0000255" key="3"/>
<evidence type="ECO:0000255" key="4">
    <source>
        <dbReference type="PROSITE-ProRule" id="PRU00038"/>
    </source>
</evidence>
<evidence type="ECO:0000255" key="5">
    <source>
        <dbReference type="PROSITE-ProRule" id="PRU00076"/>
    </source>
</evidence>
<evidence type="ECO:0000255" key="6">
    <source>
        <dbReference type="PROSITE-ProRule" id="PRU00159"/>
    </source>
</evidence>
<evidence type="ECO:0000255" key="7">
    <source>
        <dbReference type="PROSITE-ProRule" id="PRU00315"/>
    </source>
</evidence>
<evidence type="ECO:0000255" key="8">
    <source>
        <dbReference type="PROSITE-ProRule" id="PRU10027"/>
    </source>
</evidence>
<keyword id="KW-0067">ATP-binding</keyword>
<keyword id="KW-1003">Cell membrane</keyword>
<keyword id="KW-1015">Disulfide bond</keyword>
<keyword id="KW-0245">EGF-like domain</keyword>
<keyword id="KW-0325">Glycoprotein</keyword>
<keyword id="KW-0418">Kinase</keyword>
<keyword id="KW-0430">Lectin</keyword>
<keyword id="KW-0472">Membrane</keyword>
<keyword id="KW-0547">Nucleotide-binding</keyword>
<keyword id="KW-0597">Phosphoprotein</keyword>
<keyword id="KW-0675">Receptor</keyword>
<keyword id="KW-1185">Reference proteome</keyword>
<keyword id="KW-0723">Serine/threonine-protein kinase</keyword>
<keyword id="KW-0732">Signal</keyword>
<keyword id="KW-0808">Transferase</keyword>
<keyword id="KW-0812">Transmembrane</keyword>
<keyword id="KW-1133">Transmembrane helix</keyword>
<name>Y1155_ARATH</name>
<comment type="catalytic activity">
    <reaction>
        <text>L-seryl-[protein] + ATP = O-phospho-L-seryl-[protein] + ADP + H(+)</text>
        <dbReference type="Rhea" id="RHEA:17989"/>
        <dbReference type="Rhea" id="RHEA-COMP:9863"/>
        <dbReference type="Rhea" id="RHEA-COMP:11604"/>
        <dbReference type="ChEBI" id="CHEBI:15378"/>
        <dbReference type="ChEBI" id="CHEBI:29999"/>
        <dbReference type="ChEBI" id="CHEBI:30616"/>
        <dbReference type="ChEBI" id="CHEBI:83421"/>
        <dbReference type="ChEBI" id="CHEBI:456216"/>
        <dbReference type="EC" id="2.7.11.1"/>
    </reaction>
</comment>
<comment type="catalytic activity">
    <reaction>
        <text>L-threonyl-[protein] + ATP = O-phospho-L-threonyl-[protein] + ADP + H(+)</text>
        <dbReference type="Rhea" id="RHEA:46608"/>
        <dbReference type="Rhea" id="RHEA-COMP:11060"/>
        <dbReference type="Rhea" id="RHEA-COMP:11605"/>
        <dbReference type="ChEBI" id="CHEBI:15378"/>
        <dbReference type="ChEBI" id="CHEBI:30013"/>
        <dbReference type="ChEBI" id="CHEBI:30616"/>
        <dbReference type="ChEBI" id="CHEBI:61977"/>
        <dbReference type="ChEBI" id="CHEBI:456216"/>
        <dbReference type="EC" id="2.7.11.1"/>
    </reaction>
</comment>
<comment type="subcellular location">
    <subcellularLocation>
        <location evidence="1">Cell membrane</location>
        <topology evidence="1">Single-pass type I membrane protein</topology>
    </subcellularLocation>
</comment>
<comment type="similarity">
    <text evidence="6">Belongs to the protein kinase superfamily. Ser/Thr protein kinase family.</text>
</comment>
<dbReference type="EC" id="2.7.11.1"/>
<dbReference type="EMBL" id="AC005850">
    <property type="protein sequence ID" value="AAD25553.1"/>
    <property type="molecule type" value="Genomic_DNA"/>
</dbReference>
<dbReference type="EMBL" id="CP002684">
    <property type="protein sequence ID" value="AEE33850.1"/>
    <property type="molecule type" value="Genomic_DNA"/>
</dbReference>
<dbReference type="PIR" id="G96640">
    <property type="entry name" value="G96640"/>
</dbReference>
<dbReference type="RefSeq" id="NP_176349.1">
    <property type="nucleotide sequence ID" value="NM_104835.3"/>
</dbReference>
<dbReference type="SMR" id="Q9SY95"/>
<dbReference type="GlyGen" id="Q9SY95">
    <property type="glycosylation" value="10 sites"/>
</dbReference>
<dbReference type="PaxDb" id="3702-AT1G61550.1"/>
<dbReference type="ProteomicsDB" id="242501"/>
<dbReference type="EnsemblPlants" id="AT1G61550.1">
    <property type="protein sequence ID" value="AT1G61550.1"/>
    <property type="gene ID" value="AT1G61550"/>
</dbReference>
<dbReference type="GeneID" id="842449"/>
<dbReference type="Gramene" id="AT1G61550.1">
    <property type="protein sequence ID" value="AT1G61550.1"/>
    <property type="gene ID" value="AT1G61550"/>
</dbReference>
<dbReference type="KEGG" id="ath:AT1G61550"/>
<dbReference type="Araport" id="AT1G61550"/>
<dbReference type="TAIR" id="AT1G61550"/>
<dbReference type="HOGENOM" id="CLU_000288_116_1_1"/>
<dbReference type="InParanoid" id="Q9SY95"/>
<dbReference type="OMA" id="WQKENDP"/>
<dbReference type="PhylomeDB" id="Q9SY95"/>
<dbReference type="PRO" id="PR:Q9SY95"/>
<dbReference type="Proteomes" id="UP000006548">
    <property type="component" value="Chromosome 1"/>
</dbReference>
<dbReference type="ExpressionAtlas" id="Q9SY95">
    <property type="expression patterns" value="baseline and differential"/>
</dbReference>
<dbReference type="GO" id="GO:0005886">
    <property type="term" value="C:plasma membrane"/>
    <property type="evidence" value="ECO:0007669"/>
    <property type="project" value="UniProtKB-SubCell"/>
</dbReference>
<dbReference type="GO" id="GO:0005524">
    <property type="term" value="F:ATP binding"/>
    <property type="evidence" value="ECO:0007669"/>
    <property type="project" value="UniProtKB-KW"/>
</dbReference>
<dbReference type="GO" id="GO:0005516">
    <property type="term" value="F:calmodulin binding"/>
    <property type="evidence" value="ECO:0000250"/>
    <property type="project" value="UniProtKB"/>
</dbReference>
<dbReference type="GO" id="GO:0030246">
    <property type="term" value="F:carbohydrate binding"/>
    <property type="evidence" value="ECO:0007669"/>
    <property type="project" value="UniProtKB-KW"/>
</dbReference>
<dbReference type="GO" id="GO:0106310">
    <property type="term" value="F:protein serine kinase activity"/>
    <property type="evidence" value="ECO:0007669"/>
    <property type="project" value="RHEA"/>
</dbReference>
<dbReference type="GO" id="GO:0004674">
    <property type="term" value="F:protein serine/threonine kinase activity"/>
    <property type="evidence" value="ECO:0000250"/>
    <property type="project" value="UniProtKB"/>
</dbReference>
<dbReference type="GO" id="GO:0031625">
    <property type="term" value="F:ubiquitin protein ligase binding"/>
    <property type="evidence" value="ECO:0007669"/>
    <property type="project" value="UniProtKB-ARBA"/>
</dbReference>
<dbReference type="GO" id="GO:0048544">
    <property type="term" value="P:recognition of pollen"/>
    <property type="evidence" value="ECO:0007669"/>
    <property type="project" value="InterPro"/>
</dbReference>
<dbReference type="CDD" id="cd00028">
    <property type="entry name" value="B_lectin"/>
    <property type="match status" value="1"/>
</dbReference>
<dbReference type="CDD" id="cd01098">
    <property type="entry name" value="PAN_AP_plant"/>
    <property type="match status" value="1"/>
</dbReference>
<dbReference type="CDD" id="cd14066">
    <property type="entry name" value="STKc_IRAK"/>
    <property type="match status" value="1"/>
</dbReference>
<dbReference type="FunFam" id="1.10.510.10:FF:000345">
    <property type="entry name" value="G-type lectin S-receptor-like serine/threonine-protein kinase"/>
    <property type="match status" value="1"/>
</dbReference>
<dbReference type="FunFam" id="2.90.10.10:FF:000003">
    <property type="entry name" value="G-type lectin S-receptor-like serine/threonine-protein kinase"/>
    <property type="match status" value="1"/>
</dbReference>
<dbReference type="FunFam" id="3.30.200.20:FF:000401">
    <property type="entry name" value="G-type lectin S-receptor-like serine/threonine-protein kinase SD1-29"/>
    <property type="match status" value="1"/>
</dbReference>
<dbReference type="Gene3D" id="2.90.10.10">
    <property type="entry name" value="Bulb-type lectin domain"/>
    <property type="match status" value="1"/>
</dbReference>
<dbReference type="Gene3D" id="3.30.200.20">
    <property type="entry name" value="Phosphorylase Kinase, domain 1"/>
    <property type="match status" value="1"/>
</dbReference>
<dbReference type="Gene3D" id="1.10.510.10">
    <property type="entry name" value="Transferase(Phosphotransferase) domain 1"/>
    <property type="match status" value="1"/>
</dbReference>
<dbReference type="InterPro" id="IPR001480">
    <property type="entry name" value="Bulb-type_lectin_dom"/>
</dbReference>
<dbReference type="InterPro" id="IPR036426">
    <property type="entry name" value="Bulb-type_lectin_dom_sf"/>
</dbReference>
<dbReference type="InterPro" id="IPR000742">
    <property type="entry name" value="EGF-like_dom"/>
</dbReference>
<dbReference type="InterPro" id="IPR011009">
    <property type="entry name" value="Kinase-like_dom_sf"/>
</dbReference>
<dbReference type="InterPro" id="IPR003609">
    <property type="entry name" value="Pan_app"/>
</dbReference>
<dbReference type="InterPro" id="IPR000719">
    <property type="entry name" value="Prot_kinase_dom"/>
</dbReference>
<dbReference type="InterPro" id="IPR021820">
    <property type="entry name" value="S-locus_recpt_kinase_C"/>
</dbReference>
<dbReference type="InterPro" id="IPR000858">
    <property type="entry name" value="S_locus_glycoprot_dom"/>
</dbReference>
<dbReference type="InterPro" id="IPR001245">
    <property type="entry name" value="Ser-Thr/Tyr_kinase_cat_dom"/>
</dbReference>
<dbReference type="InterPro" id="IPR008271">
    <property type="entry name" value="Ser/Thr_kinase_AS"/>
</dbReference>
<dbReference type="InterPro" id="IPR024171">
    <property type="entry name" value="SRK-like_kinase"/>
</dbReference>
<dbReference type="PANTHER" id="PTHR27002:SF506">
    <property type="entry name" value="ATP BINDING _ PROTEIN KINASE"/>
    <property type="match status" value="1"/>
</dbReference>
<dbReference type="PANTHER" id="PTHR27002">
    <property type="entry name" value="RECEPTOR-LIKE SERINE/THREONINE-PROTEIN KINASE SD1-8"/>
    <property type="match status" value="1"/>
</dbReference>
<dbReference type="Pfam" id="PF01453">
    <property type="entry name" value="B_lectin"/>
    <property type="match status" value="1"/>
</dbReference>
<dbReference type="Pfam" id="PF11883">
    <property type="entry name" value="DUF3403"/>
    <property type="match status" value="1"/>
</dbReference>
<dbReference type="Pfam" id="PF08276">
    <property type="entry name" value="PAN_2"/>
    <property type="match status" value="1"/>
</dbReference>
<dbReference type="Pfam" id="PF07714">
    <property type="entry name" value="PK_Tyr_Ser-Thr"/>
    <property type="match status" value="1"/>
</dbReference>
<dbReference type="Pfam" id="PF00954">
    <property type="entry name" value="S_locus_glycop"/>
    <property type="match status" value="1"/>
</dbReference>
<dbReference type="PIRSF" id="PIRSF000641">
    <property type="entry name" value="SRK"/>
    <property type="match status" value="1"/>
</dbReference>
<dbReference type="SMART" id="SM00108">
    <property type="entry name" value="B_lectin"/>
    <property type="match status" value="1"/>
</dbReference>
<dbReference type="SMART" id="SM00473">
    <property type="entry name" value="PAN_AP"/>
    <property type="match status" value="1"/>
</dbReference>
<dbReference type="SMART" id="SM00220">
    <property type="entry name" value="S_TKc"/>
    <property type="match status" value="1"/>
</dbReference>
<dbReference type="SUPFAM" id="SSF51110">
    <property type="entry name" value="alpha-D-mannose-specific plant lectins"/>
    <property type="match status" value="1"/>
</dbReference>
<dbReference type="SUPFAM" id="SSF56112">
    <property type="entry name" value="Protein kinase-like (PK-like)"/>
    <property type="match status" value="1"/>
</dbReference>
<dbReference type="PROSITE" id="PS50927">
    <property type="entry name" value="BULB_LECTIN"/>
    <property type="match status" value="1"/>
</dbReference>
<dbReference type="PROSITE" id="PS50026">
    <property type="entry name" value="EGF_3"/>
    <property type="match status" value="1"/>
</dbReference>
<dbReference type="PROSITE" id="PS50948">
    <property type="entry name" value="PAN"/>
    <property type="match status" value="1"/>
</dbReference>
<dbReference type="PROSITE" id="PS50011">
    <property type="entry name" value="PROTEIN_KINASE_DOM"/>
    <property type="match status" value="1"/>
</dbReference>
<dbReference type="PROSITE" id="PS00108">
    <property type="entry name" value="PROTEIN_KINASE_ST"/>
    <property type="match status" value="1"/>
</dbReference>
<protein>
    <recommendedName>
        <fullName>G-type lectin S-receptor-like serine/threonine-protein kinase At1g61550</fullName>
        <ecNumber>2.7.11.1</ecNumber>
    </recommendedName>
</protein>
<organism>
    <name type="scientific">Arabidopsis thaliana</name>
    <name type="common">Mouse-ear cress</name>
    <dbReference type="NCBI Taxonomy" id="3702"/>
    <lineage>
        <taxon>Eukaryota</taxon>
        <taxon>Viridiplantae</taxon>
        <taxon>Streptophyta</taxon>
        <taxon>Embryophyta</taxon>
        <taxon>Tracheophyta</taxon>
        <taxon>Spermatophyta</taxon>
        <taxon>Magnoliopsida</taxon>
        <taxon>eudicotyledons</taxon>
        <taxon>Gunneridae</taxon>
        <taxon>Pentapetalae</taxon>
        <taxon>rosids</taxon>
        <taxon>malvids</taxon>
        <taxon>Brassicales</taxon>
        <taxon>Brassicaceae</taxon>
        <taxon>Camelineae</taxon>
        <taxon>Arabidopsis</taxon>
    </lineage>
</organism>
<sequence>MTRFACFLFSTLLLSFSYAAITPTSPLSIGQTLSSPNGIFELGFFSPNNSRNLYVGIWFKGIIPRTVVWVANRENSVTDATADLAISSNGSLLLFDGKHSTVWSTGETFASNGSSAELSDSGNLLVIDKVSGITLWQSFEHLGDTMLPYSSLMYNPGTGEKRVLSSWKSYTDPLPGEFVGYITTQVPPQGFIMRGSKPYWRSGPWAKTRFTGVPLTDESYTHPFSVQQDANGSVYFSHLQRNFKRSLLVLTSEGSLKVTHHNGTDWVLNIDVPANTCDFYGVCGPFGLCVMSIPPKCKCFKGFVPQFSEEWKRGNWTGGCVRRTELLCQGNSTGRHVNVFHPVANIKPPDFYEFVSSGSAEECYQSCLHNCSCLAFAYINGIGCLIWNQELMDVMQFSVGGELLSIRLASSEMGGNQRKKTIIASIVSISLFVTLASAAFGFWRYRLKHNAIVSKVSLQGAWRNDLKSEDVSGLYFFEMKTIEIATNNFSLVNKLGQGGFGPVYKGKLQDGKEIAVKRLSSSSGQGKEEFMNEILLISKLQHINLVRILGCCIEGEERLLVYEFMVNKSLDTFIFDSRKRVEIDWPKRFSIIQGIARGLLYLHRDSRLRIIHRDVKVSNILLDDKMNPKISDFGLARMYEGTKYQDNTRRIVGTLGYMSPEYAWTGVFSEKSDTYSFGVLLLEVISGEKISRFSYDKERKNLLAYAWESWCENGGVGFLDKDATDSCHPSEVGRCVQIGLLCVQHQPADRPNTLELLSMLTTTSDLPLPKEPTFAVHTSDDGSRTSDLITVNEVTQSVVLGR</sequence>
<reference key="1">
    <citation type="journal article" date="2000" name="Nature">
        <title>Sequence and analysis of chromosome 1 of the plant Arabidopsis thaliana.</title>
        <authorList>
            <person name="Theologis A."/>
            <person name="Ecker J.R."/>
            <person name="Palm C.J."/>
            <person name="Federspiel N.A."/>
            <person name="Kaul S."/>
            <person name="White O."/>
            <person name="Alonso J."/>
            <person name="Altafi H."/>
            <person name="Araujo R."/>
            <person name="Bowman C.L."/>
            <person name="Brooks S.Y."/>
            <person name="Buehler E."/>
            <person name="Chan A."/>
            <person name="Chao Q."/>
            <person name="Chen H."/>
            <person name="Cheuk R.F."/>
            <person name="Chin C.W."/>
            <person name="Chung M.K."/>
            <person name="Conn L."/>
            <person name="Conway A.B."/>
            <person name="Conway A.R."/>
            <person name="Creasy T.H."/>
            <person name="Dewar K."/>
            <person name="Dunn P."/>
            <person name="Etgu P."/>
            <person name="Feldblyum T.V."/>
            <person name="Feng J.-D."/>
            <person name="Fong B."/>
            <person name="Fujii C.Y."/>
            <person name="Gill J.E."/>
            <person name="Goldsmith A.D."/>
            <person name="Haas B."/>
            <person name="Hansen N.F."/>
            <person name="Hughes B."/>
            <person name="Huizar L."/>
            <person name="Hunter J.L."/>
            <person name="Jenkins J."/>
            <person name="Johnson-Hopson C."/>
            <person name="Khan S."/>
            <person name="Khaykin E."/>
            <person name="Kim C.J."/>
            <person name="Koo H.L."/>
            <person name="Kremenetskaia I."/>
            <person name="Kurtz D.B."/>
            <person name="Kwan A."/>
            <person name="Lam B."/>
            <person name="Langin-Hooper S."/>
            <person name="Lee A."/>
            <person name="Lee J.M."/>
            <person name="Lenz C.A."/>
            <person name="Li J.H."/>
            <person name="Li Y.-P."/>
            <person name="Lin X."/>
            <person name="Liu S.X."/>
            <person name="Liu Z.A."/>
            <person name="Luros J.S."/>
            <person name="Maiti R."/>
            <person name="Marziali A."/>
            <person name="Militscher J."/>
            <person name="Miranda M."/>
            <person name="Nguyen M."/>
            <person name="Nierman W.C."/>
            <person name="Osborne B.I."/>
            <person name="Pai G."/>
            <person name="Peterson J."/>
            <person name="Pham P.K."/>
            <person name="Rizzo M."/>
            <person name="Rooney T."/>
            <person name="Rowley D."/>
            <person name="Sakano H."/>
            <person name="Salzberg S.L."/>
            <person name="Schwartz J.R."/>
            <person name="Shinn P."/>
            <person name="Southwick A.M."/>
            <person name="Sun H."/>
            <person name="Tallon L.J."/>
            <person name="Tambunga G."/>
            <person name="Toriumi M.J."/>
            <person name="Town C.D."/>
            <person name="Utterback T."/>
            <person name="Van Aken S."/>
            <person name="Vaysberg M."/>
            <person name="Vysotskaia V.S."/>
            <person name="Walker M."/>
            <person name="Wu D."/>
            <person name="Yu G."/>
            <person name="Fraser C.M."/>
            <person name="Venter J.C."/>
            <person name="Davis R.W."/>
        </authorList>
    </citation>
    <scope>NUCLEOTIDE SEQUENCE [LARGE SCALE GENOMIC DNA]</scope>
    <source>
        <strain>cv. Columbia</strain>
    </source>
</reference>
<reference key="2">
    <citation type="journal article" date="2017" name="Plant J.">
        <title>Araport11: a complete reannotation of the Arabidopsis thaliana reference genome.</title>
        <authorList>
            <person name="Cheng C.Y."/>
            <person name="Krishnakumar V."/>
            <person name="Chan A.P."/>
            <person name="Thibaud-Nissen F."/>
            <person name="Schobel S."/>
            <person name="Town C.D."/>
        </authorList>
    </citation>
    <scope>GENOME REANNOTATION</scope>
    <source>
        <strain>cv. Columbia</strain>
    </source>
</reference>